<name>RPAB4_BOVIN</name>
<proteinExistence type="evidence at protein level"/>
<comment type="function">
    <text evidence="1 2 3">DNA-dependent RNA polymerase catalyzes the transcription of DNA into RNA using the four ribonucleoside triphosphates as substrates. Common component of RNA polymerases I, II and III which synthesize ribosomal RNA precursors, mRNA precursors and many functional non-coding RNAs, and a small RNAs, such as 5S rRNA and tRNAs, respectively.</text>
</comment>
<comment type="subunit">
    <text evidence="1 3 4">Component of the RNA polymerase I (Pol I), RNA polymerase II (Pol II) and RNA polymerase III (Pol III) complexes consisting of at least 13, 12 and 17 subunits, respectively (By similarity) (PubMed:26789250, PubMed:28892040). Pol I complex consists of a ten-subunit catalytic core composed of POLR1A/RPA1, POLR1B/RPA2, POLR1C/RPAC1, POLR1D/RPAC2, POLR1H/RPA12, POLR2E/RPABC1, POLR2F/RPABC2, POLR2H/RPABC3, POLR2K/RPABC4 and POLR2L/RPABC5; a mobile stalk subunit POLR1F/RPA43 protruding from the core and additional subunits homologous to general transcription factors POLR1E/RPA49 and POLR1G/RPA34. Part of Pol I pre-initiation complex (PIC), in which Pol I core assembles with RRN3 and promoter-bound UTBF and SL1/TIF-IB complex (By similarity). Pol II complex contains a ten-subunit catalytic core composed of POLR2A/RPB1, POLR2B/RPB2, POLR2C/RPB3, POLR2I/RPB9, POLR2J/RPB11, POLR2E/RPABC1, POLR2F/RPABC2, POLR2H/RPABC3, POLR2K/RPABC4 and POLR2L/RPABC5 and a mobile stalk composed of two subunits POLR2D/RPB4 and POLR2G/RPB7. Part of Pol II(G) complex, in which Pol II core associates with an additional subunit POLR2M; unlike conventional Pol II, Pol II(G) functions as a transcriptional repressor. Part of TBP-based Pol II pre-initiation complex (PIC), in which Pol II core assembles with general transcription factors and other specific initiation factors including GTF2E1, GTF2E2, GTF2F1, GTF2F2, TCEA1, ERCC2, ERCC3, GTF2H2, GTF2H3, GTF2H4, GTF2H5, GTF2A1, GTF2A2, GTF2B and TBP; this large multi-subunit PIC complex mediates DNA unwinding and targets Pol II core to the transcription start site where the first phosphodiester bond forms (PubMed:26789250, PubMed:28892040). Pol III complex consists of a ten-subunit catalytic core composed of POLR3A/RPC1, POLR3B/RPC2, POLR1C/RPAC1, POLR1D/RPAC2, POLR3K/RPC10, POLR2E/RPABC1, POLR2F/RPABC2, POLR2H/RPABC3, POLR2K/RPABC4 and POLR2L/RPABC5; a mobile stalk composed of two subunits POLR3H/RPC8 and CRCP/RPC9, protruding from the core and functioning primarily in transcription initiation; and additional subunits homologous to general transcription factors of the RNA polymerase II machinery, POLR3C/RPC3-POLR3F/RPC6-POLR3G/RPC7 heterotrimer required for transcription initiation and POLR3D/RPC4-POLR3E/RPC5 heterodimer involved in both transcription initiation and termination (By similarity).</text>
</comment>
<comment type="subcellular location">
    <subcellularLocation>
        <location evidence="1">Nucleus</location>
    </subcellularLocation>
    <subcellularLocation>
        <location evidence="1">Nucleus</location>
        <location evidence="1">Nucleolus</location>
    </subcellularLocation>
</comment>
<comment type="similarity">
    <text evidence="5">Belongs to the archaeal Rpo12/eukaryotic RPC10 RNA polymerase subunit family.</text>
</comment>
<accession>Q3ZBC0</accession>
<dbReference type="EMBL" id="BC103450">
    <property type="protein sequence ID" value="AAI03451.1"/>
    <property type="molecule type" value="mRNA"/>
</dbReference>
<dbReference type="RefSeq" id="NP_001032712.1">
    <property type="nucleotide sequence ID" value="NM_001037623.3"/>
</dbReference>
<dbReference type="RefSeq" id="NP_001290464.1">
    <property type="nucleotide sequence ID" value="NM_001303535.1"/>
</dbReference>
<dbReference type="RefSeq" id="NP_001290465.1">
    <property type="nucleotide sequence ID" value="NM_001303536.1"/>
</dbReference>
<dbReference type="RefSeq" id="XP_015321795.1">
    <property type="nucleotide sequence ID" value="XM_015466309.1"/>
</dbReference>
<dbReference type="RefSeq" id="XP_015329927.1">
    <property type="nucleotide sequence ID" value="XM_015474441.1"/>
</dbReference>
<dbReference type="PDB" id="5FLM">
    <property type="method" value="EM"/>
    <property type="resolution" value="3.40 A"/>
    <property type="chains" value="L=1-58"/>
</dbReference>
<dbReference type="PDB" id="5OIK">
    <property type="method" value="EM"/>
    <property type="resolution" value="3.70 A"/>
    <property type="chains" value="L=1-58"/>
</dbReference>
<dbReference type="PDBsum" id="5FLM"/>
<dbReference type="PDBsum" id="5OIK"/>
<dbReference type="EMDB" id="EMD-3817"/>
<dbReference type="SMR" id="Q3ZBC0"/>
<dbReference type="DIP" id="DIP-61197N"/>
<dbReference type="FunCoup" id="Q3ZBC0">
    <property type="interactions" value="2346"/>
</dbReference>
<dbReference type="IntAct" id="Q3ZBC0">
    <property type="interactions" value="3"/>
</dbReference>
<dbReference type="STRING" id="9913.ENSBTAP00000030490"/>
<dbReference type="PaxDb" id="9913-ENSBTAP00000030490"/>
<dbReference type="GeneID" id="614776"/>
<dbReference type="KEGG" id="bta:614776"/>
<dbReference type="CTD" id="5440"/>
<dbReference type="VEuPathDB" id="HostDB:ENSBTAG00000022539"/>
<dbReference type="eggNOG" id="KOG3507">
    <property type="taxonomic scope" value="Eukaryota"/>
</dbReference>
<dbReference type="HOGENOM" id="CLU_179456_1_0_1"/>
<dbReference type="InParanoid" id="Q3ZBC0"/>
<dbReference type="OMA" id="IYLCADC"/>
<dbReference type="OrthoDB" id="5585087at2759"/>
<dbReference type="TreeFam" id="TF103045"/>
<dbReference type="Reactome" id="R-BTA-112382">
    <property type="pathway name" value="Formation of RNA Pol II elongation complex"/>
</dbReference>
<dbReference type="Reactome" id="R-BTA-113418">
    <property type="pathway name" value="Formation of the Early Elongation Complex"/>
</dbReference>
<dbReference type="Reactome" id="R-BTA-5250924">
    <property type="pathway name" value="B-WICH complex positively regulates rRNA expression"/>
</dbReference>
<dbReference type="Reactome" id="R-BTA-5578749">
    <property type="pathway name" value="Transcriptional regulation by small RNAs"/>
</dbReference>
<dbReference type="Reactome" id="R-BTA-674695">
    <property type="pathway name" value="RNA Polymerase II Pre-transcription Events"/>
</dbReference>
<dbReference type="Reactome" id="R-BTA-6781823">
    <property type="pathway name" value="Formation of TC-NER Pre-Incision Complex"/>
</dbReference>
<dbReference type="Reactome" id="R-BTA-6782135">
    <property type="pathway name" value="Dual incision in TC-NER"/>
</dbReference>
<dbReference type="Reactome" id="R-BTA-6782210">
    <property type="pathway name" value="Gap-filling DNA repair synthesis and ligation in TC-NER"/>
</dbReference>
<dbReference type="Reactome" id="R-BTA-6796648">
    <property type="pathway name" value="TP53 Regulates Transcription of DNA Repair Genes"/>
</dbReference>
<dbReference type="Reactome" id="R-BTA-6803529">
    <property type="pathway name" value="FGFR2 alternative splicing"/>
</dbReference>
<dbReference type="Reactome" id="R-BTA-6807505">
    <property type="pathway name" value="RNA polymerase II transcribes snRNA genes"/>
</dbReference>
<dbReference type="Reactome" id="R-BTA-72086">
    <property type="pathway name" value="mRNA Capping"/>
</dbReference>
<dbReference type="Reactome" id="R-BTA-72163">
    <property type="pathway name" value="mRNA Splicing - Major Pathway"/>
</dbReference>
<dbReference type="Reactome" id="R-BTA-72165">
    <property type="pathway name" value="mRNA Splicing - Minor Pathway"/>
</dbReference>
<dbReference type="Reactome" id="R-BTA-72203">
    <property type="pathway name" value="Processing of Capped Intron-Containing Pre-mRNA"/>
</dbReference>
<dbReference type="Reactome" id="R-BTA-73762">
    <property type="pathway name" value="RNA Polymerase I Transcription Initiation"/>
</dbReference>
<dbReference type="Reactome" id="R-BTA-73772">
    <property type="pathway name" value="RNA Polymerase I Promoter Escape"/>
</dbReference>
<dbReference type="Reactome" id="R-BTA-73776">
    <property type="pathway name" value="RNA Polymerase II Promoter Escape"/>
</dbReference>
<dbReference type="Reactome" id="R-BTA-73779">
    <property type="pathway name" value="RNA Polymerase II Transcription Pre-Initiation And Promoter Opening"/>
</dbReference>
<dbReference type="Reactome" id="R-BTA-73863">
    <property type="pathway name" value="RNA Polymerase I Transcription Termination"/>
</dbReference>
<dbReference type="Reactome" id="R-BTA-75953">
    <property type="pathway name" value="RNA Polymerase II Transcription Initiation"/>
</dbReference>
<dbReference type="Reactome" id="R-BTA-75955">
    <property type="pathway name" value="RNA Polymerase II Transcription Elongation"/>
</dbReference>
<dbReference type="Reactome" id="R-BTA-76042">
    <property type="pathway name" value="RNA Polymerase II Transcription Initiation And Promoter Clearance"/>
</dbReference>
<dbReference type="Reactome" id="R-BTA-76061">
    <property type="pathway name" value="RNA Polymerase III Transcription Initiation From Type 1 Promoter"/>
</dbReference>
<dbReference type="Reactome" id="R-BTA-76066">
    <property type="pathway name" value="RNA Polymerase III Transcription Initiation From Type 2 Promoter"/>
</dbReference>
<dbReference type="Reactome" id="R-BTA-76071">
    <property type="pathway name" value="RNA Polymerase III Transcription Initiation From Type 3 Promoter"/>
</dbReference>
<dbReference type="Reactome" id="R-BTA-77075">
    <property type="pathway name" value="RNA Pol II CTD phosphorylation and interaction with CE"/>
</dbReference>
<dbReference type="Reactome" id="R-BTA-9018519">
    <property type="pathway name" value="Estrogen-dependent gene expression"/>
</dbReference>
<dbReference type="EvolutionaryTrace" id="Q3ZBC0"/>
<dbReference type="Proteomes" id="UP000009136">
    <property type="component" value="Chromosome 14"/>
</dbReference>
<dbReference type="Bgee" id="ENSBTAG00000022539">
    <property type="expression patterns" value="Expressed in biceps femoris and 105 other cell types or tissues"/>
</dbReference>
<dbReference type="GO" id="GO:0005634">
    <property type="term" value="C:nucleus"/>
    <property type="evidence" value="ECO:0000250"/>
    <property type="project" value="UniProtKB"/>
</dbReference>
<dbReference type="GO" id="GO:0005736">
    <property type="term" value="C:RNA polymerase I complex"/>
    <property type="evidence" value="ECO:0000318"/>
    <property type="project" value="GO_Central"/>
</dbReference>
<dbReference type="GO" id="GO:0005665">
    <property type="term" value="C:RNA polymerase II, core complex"/>
    <property type="evidence" value="ECO:0000314"/>
    <property type="project" value="UniProtKB"/>
</dbReference>
<dbReference type="GO" id="GO:0005666">
    <property type="term" value="C:RNA polymerase III complex"/>
    <property type="evidence" value="ECO:0000318"/>
    <property type="project" value="GO_Central"/>
</dbReference>
<dbReference type="GO" id="GO:0003677">
    <property type="term" value="F:DNA binding"/>
    <property type="evidence" value="ECO:0007669"/>
    <property type="project" value="InterPro"/>
</dbReference>
<dbReference type="GO" id="GO:0003899">
    <property type="term" value="F:DNA-directed RNA polymerase activity"/>
    <property type="evidence" value="ECO:0007669"/>
    <property type="project" value="InterPro"/>
</dbReference>
<dbReference type="GO" id="GO:0008270">
    <property type="term" value="F:zinc ion binding"/>
    <property type="evidence" value="ECO:0000314"/>
    <property type="project" value="UniProtKB"/>
</dbReference>
<dbReference type="GO" id="GO:0006366">
    <property type="term" value="P:transcription by RNA polymerase II"/>
    <property type="evidence" value="ECO:0000250"/>
    <property type="project" value="UniProtKB"/>
</dbReference>
<dbReference type="FunFam" id="2.20.28.30:FF:000001">
    <property type="entry name" value="DNA-directed RNA polymerases I, II, and III subunit RPABC4"/>
    <property type="match status" value="1"/>
</dbReference>
<dbReference type="Gene3D" id="2.20.28.30">
    <property type="entry name" value="RNA polymerase ii, chain L"/>
    <property type="match status" value="1"/>
</dbReference>
<dbReference type="InterPro" id="IPR006591">
    <property type="entry name" value="RNAP_P/RPABC4"/>
</dbReference>
<dbReference type="InterPro" id="IPR039747">
    <property type="entry name" value="RPABC4"/>
</dbReference>
<dbReference type="InterPro" id="IPR029040">
    <property type="entry name" value="RPABC4/Spt4"/>
</dbReference>
<dbReference type="PANTHER" id="PTHR12056">
    <property type="entry name" value="DNA-DIRECTED RNA POLYMERASES I, II, AND III"/>
    <property type="match status" value="1"/>
</dbReference>
<dbReference type="PANTHER" id="PTHR12056:SF4">
    <property type="entry name" value="DNA-DIRECTED RNA POLYMERASES I, II, AND III SUBUNIT RPABC4"/>
    <property type="match status" value="1"/>
</dbReference>
<dbReference type="Pfam" id="PF03604">
    <property type="entry name" value="Zn_ribbon_RPAB4"/>
    <property type="match status" value="1"/>
</dbReference>
<dbReference type="SMART" id="SM00659">
    <property type="entry name" value="RPOLCX"/>
    <property type="match status" value="1"/>
</dbReference>
<dbReference type="SUPFAM" id="SSF63393">
    <property type="entry name" value="RNA polymerase subunits"/>
    <property type="match status" value="1"/>
</dbReference>
<sequence length="58" mass="7004">MDTQKDVQPPKQQPMIYICGECHTENEIKSRDPIRCRECGYRIMYKKRTKRLVVFDAR</sequence>
<protein>
    <recommendedName>
        <fullName>DNA-directed RNA polymerases I, II, and III subunit RPABC4</fullName>
        <shortName>RNA polymerases I, II, and III subunit ABC4</shortName>
    </recommendedName>
    <alternativeName>
        <fullName>DNA-directed RNA polymerase II subunit K</fullName>
    </alternativeName>
</protein>
<keyword id="KW-0002">3D-structure</keyword>
<keyword id="KW-0240">DNA-directed RNA polymerase</keyword>
<keyword id="KW-0479">Metal-binding</keyword>
<keyword id="KW-0539">Nucleus</keyword>
<keyword id="KW-1185">Reference proteome</keyword>
<keyword id="KW-0804">Transcription</keyword>
<keyword id="KW-0862">Zinc</keyword>
<keyword id="KW-0863">Zinc-finger</keyword>
<evidence type="ECO:0000250" key="1">
    <source>
        <dbReference type="UniProtKB" id="P53803"/>
    </source>
</evidence>
<evidence type="ECO:0000269" key="2">
    <source>
    </source>
</evidence>
<evidence type="ECO:0000269" key="3">
    <source>
    </source>
</evidence>
<evidence type="ECO:0000269" key="4">
    <source>
    </source>
</evidence>
<evidence type="ECO:0000305" key="5"/>
<evidence type="ECO:0007744" key="6">
    <source>
        <dbReference type="PDB" id="5FLM"/>
    </source>
</evidence>
<evidence type="ECO:0007744" key="7">
    <source>
        <dbReference type="PDB" id="5OIK"/>
    </source>
</evidence>
<evidence type="ECO:0007829" key="8">
    <source>
        <dbReference type="PDB" id="5FLM"/>
    </source>
</evidence>
<reference key="1">
    <citation type="submission" date="2005-08" db="EMBL/GenBank/DDBJ databases">
        <authorList>
            <consortium name="NIH - Mammalian Gene Collection (MGC) project"/>
        </authorList>
    </citation>
    <scope>NUCLEOTIDE SEQUENCE [LARGE SCALE MRNA]</scope>
    <source>
        <strain>Hereford</strain>
        <tissue>Hypothalamus</tissue>
    </source>
</reference>
<reference key="2">
    <citation type="journal article" date="2006" name="Proc. Natl. Acad. Sci. U.S.A.">
        <title>A Mediator-responsive form of metazoan RNA polymerase II.</title>
        <authorList>
            <person name="Hu X."/>
            <person name="Malik S."/>
            <person name="Negroiu C.C."/>
            <person name="Hubbard K."/>
            <person name="Velalar C.N."/>
            <person name="Hampton B."/>
            <person name="Grosu D."/>
            <person name="Catalano J."/>
            <person name="Roeder R.G."/>
            <person name="Gnatt A."/>
        </authorList>
    </citation>
    <scope>FUNCTION</scope>
    <scope>SUBUNIT</scope>
    <scope>IDENTIFICATION IN THE POL II AND POL II(G) COMPLEXES</scope>
</reference>
<reference key="3">
    <citation type="journal article" date="2016" name="Nature">
        <title>Structure of transcribing mammalian RNA polymerase II.</title>
        <authorList>
            <person name="Bernecky C."/>
            <person name="Herzog F."/>
            <person name="Baumeister W."/>
            <person name="Plitzko J.M."/>
            <person name="Cramer P."/>
        </authorList>
    </citation>
    <scope>STRUCTURE BY ELECTRON MICROSCOPY (3.40 ANGSTROMS)</scope>
    <scope>FUNCTION OF POL II</scope>
    <scope>SUBUNIT</scope>
</reference>
<reference key="4">
    <citation type="journal article" date="2017" name="Nat. Struct. Mol. Biol.">
        <title>Structure of a transcribing RNA polymerase II-DSIF complex reveals a multidentate DNA-RNA clamp.</title>
        <authorList>
            <person name="Bernecky C."/>
            <person name="Plitzko J.M."/>
            <person name="Cramer P."/>
        </authorList>
    </citation>
    <scope>STRUCTURE BY ELECTRON MICROSCOPY (3.70 ANGSTROMS)</scope>
    <scope>SUBUNIT</scope>
</reference>
<feature type="chain" id="PRO_0000291378" description="DNA-directed RNA polymerases I, II, and III subunit RPABC4">
    <location>
        <begin position="1"/>
        <end position="58"/>
    </location>
</feature>
<feature type="zinc finger region" description="C4-type" evidence="3 4 6 7">
    <location>
        <begin position="19"/>
        <end position="39"/>
    </location>
</feature>
<feature type="binding site" evidence="3 4 6 7">
    <location>
        <position position="19"/>
    </location>
    <ligand>
        <name>Zn(2+)</name>
        <dbReference type="ChEBI" id="CHEBI:29105"/>
    </ligand>
</feature>
<feature type="binding site" evidence="3 4 6 7">
    <location>
        <position position="22"/>
    </location>
    <ligand>
        <name>Zn(2+)</name>
        <dbReference type="ChEBI" id="CHEBI:29105"/>
    </ligand>
</feature>
<feature type="binding site" evidence="3 4 6 7">
    <location>
        <position position="36"/>
    </location>
    <ligand>
        <name>Zn(2+)</name>
        <dbReference type="ChEBI" id="CHEBI:29105"/>
    </ligand>
</feature>
<feature type="binding site" evidence="3 4 6 7">
    <location>
        <position position="39"/>
    </location>
    <ligand>
        <name>Zn(2+)</name>
        <dbReference type="ChEBI" id="CHEBI:29105"/>
    </ligand>
</feature>
<feature type="strand" evidence="8">
    <location>
        <begin position="16"/>
        <end position="22"/>
    </location>
</feature>
<feature type="turn" evidence="8">
    <location>
        <begin position="37"/>
        <end position="39"/>
    </location>
</feature>
<feature type="strand" evidence="8">
    <location>
        <begin position="54"/>
        <end position="56"/>
    </location>
</feature>
<organism>
    <name type="scientific">Bos taurus</name>
    <name type="common">Bovine</name>
    <dbReference type="NCBI Taxonomy" id="9913"/>
    <lineage>
        <taxon>Eukaryota</taxon>
        <taxon>Metazoa</taxon>
        <taxon>Chordata</taxon>
        <taxon>Craniata</taxon>
        <taxon>Vertebrata</taxon>
        <taxon>Euteleostomi</taxon>
        <taxon>Mammalia</taxon>
        <taxon>Eutheria</taxon>
        <taxon>Laurasiatheria</taxon>
        <taxon>Artiodactyla</taxon>
        <taxon>Ruminantia</taxon>
        <taxon>Pecora</taxon>
        <taxon>Bovidae</taxon>
        <taxon>Bovinae</taxon>
        <taxon>Bos</taxon>
    </lineage>
</organism>
<gene>
    <name type="primary">POLR2K</name>
</gene>